<dbReference type="EC" id="5.6.1.6" evidence="1"/>
<dbReference type="EMBL" id="DP000180">
    <property type="protein sequence ID" value="ABI75310.1"/>
    <property type="molecule type" value="Genomic_DNA"/>
</dbReference>
<dbReference type="RefSeq" id="XP_003921101.2">
    <property type="nucleotide sequence ID" value="XM_003921052.3"/>
</dbReference>
<dbReference type="SMR" id="Q09YH0"/>
<dbReference type="STRING" id="39432.ENSSBOP00000036747"/>
<dbReference type="GlyCosmos" id="Q09YH0">
    <property type="glycosylation" value="3 sites, No reported glycans"/>
</dbReference>
<dbReference type="Ensembl" id="ENSSBOT00000053682.1">
    <property type="protein sequence ID" value="ENSSBOP00000036747.1"/>
    <property type="gene ID" value="ENSSBOG00000034493.1"/>
</dbReference>
<dbReference type="GeneID" id="101036459"/>
<dbReference type="KEGG" id="sbq:101036459"/>
<dbReference type="CTD" id="1080"/>
<dbReference type="GeneTree" id="ENSGT00940000158567"/>
<dbReference type="OMA" id="CQRYLVI"/>
<dbReference type="OrthoDB" id="67501at9443"/>
<dbReference type="Proteomes" id="UP000233220">
    <property type="component" value="Unplaced"/>
</dbReference>
<dbReference type="GO" id="GO:0016324">
    <property type="term" value="C:apical plasma membrane"/>
    <property type="evidence" value="ECO:0000250"/>
    <property type="project" value="UniProtKB"/>
</dbReference>
<dbReference type="GO" id="GO:0009986">
    <property type="term" value="C:cell surface"/>
    <property type="evidence" value="ECO:0007669"/>
    <property type="project" value="Ensembl"/>
</dbReference>
<dbReference type="GO" id="GO:0034707">
    <property type="term" value="C:chloride channel complex"/>
    <property type="evidence" value="ECO:0007669"/>
    <property type="project" value="UniProtKB-KW"/>
</dbReference>
<dbReference type="GO" id="GO:0005829">
    <property type="term" value="C:cytosol"/>
    <property type="evidence" value="ECO:0007669"/>
    <property type="project" value="Ensembl"/>
</dbReference>
<dbReference type="GO" id="GO:0005769">
    <property type="term" value="C:early endosome"/>
    <property type="evidence" value="ECO:0000250"/>
    <property type="project" value="UniProtKB"/>
</dbReference>
<dbReference type="GO" id="GO:0031901">
    <property type="term" value="C:early endosome membrane"/>
    <property type="evidence" value="ECO:0007669"/>
    <property type="project" value="UniProtKB-SubCell"/>
</dbReference>
<dbReference type="GO" id="GO:0005789">
    <property type="term" value="C:endoplasmic reticulum membrane"/>
    <property type="evidence" value="ECO:0000250"/>
    <property type="project" value="UniProtKB"/>
</dbReference>
<dbReference type="GO" id="GO:0016020">
    <property type="term" value="C:membrane"/>
    <property type="evidence" value="ECO:0000250"/>
    <property type="project" value="UniProtKB"/>
</dbReference>
<dbReference type="GO" id="GO:0005634">
    <property type="term" value="C:nucleus"/>
    <property type="evidence" value="ECO:0000250"/>
    <property type="project" value="UniProtKB"/>
</dbReference>
<dbReference type="GO" id="GO:0005886">
    <property type="term" value="C:plasma membrane"/>
    <property type="evidence" value="ECO:0000250"/>
    <property type="project" value="UniProtKB"/>
</dbReference>
<dbReference type="GO" id="GO:0055038">
    <property type="term" value="C:recycling endosome membrane"/>
    <property type="evidence" value="ECO:0007669"/>
    <property type="project" value="UniProtKB-SubCell"/>
</dbReference>
<dbReference type="GO" id="GO:0071889">
    <property type="term" value="F:14-3-3 protein binding"/>
    <property type="evidence" value="ECO:0007669"/>
    <property type="project" value="Ensembl"/>
</dbReference>
<dbReference type="GO" id="GO:0140359">
    <property type="term" value="F:ABC-type transporter activity"/>
    <property type="evidence" value="ECO:0007669"/>
    <property type="project" value="InterPro"/>
</dbReference>
<dbReference type="GO" id="GO:0005524">
    <property type="term" value="F:ATP binding"/>
    <property type="evidence" value="ECO:0007669"/>
    <property type="project" value="UniProtKB-KW"/>
</dbReference>
<dbReference type="GO" id="GO:0016887">
    <property type="term" value="F:ATP hydrolysis activity"/>
    <property type="evidence" value="ECO:0000250"/>
    <property type="project" value="UniProtKB"/>
</dbReference>
<dbReference type="GO" id="GO:0015106">
    <property type="term" value="F:bicarbonate transmembrane transporter activity"/>
    <property type="evidence" value="ECO:0000250"/>
    <property type="project" value="UniProtKB"/>
</dbReference>
<dbReference type="GO" id="GO:0005254">
    <property type="term" value="F:chloride channel activity"/>
    <property type="evidence" value="ECO:0000250"/>
    <property type="project" value="UniProtKB"/>
</dbReference>
<dbReference type="GO" id="GO:0019869">
    <property type="term" value="F:chloride channel inhibitor activity"/>
    <property type="evidence" value="ECO:0000250"/>
    <property type="project" value="UniProtKB"/>
</dbReference>
<dbReference type="GO" id="GO:0015108">
    <property type="term" value="F:chloride transmembrane transporter activity"/>
    <property type="evidence" value="ECO:0000250"/>
    <property type="project" value="UniProtKB"/>
</dbReference>
<dbReference type="GO" id="GO:0019899">
    <property type="term" value="F:enzyme binding"/>
    <property type="evidence" value="ECO:0007669"/>
    <property type="project" value="Ensembl"/>
</dbReference>
<dbReference type="GO" id="GO:0005260">
    <property type="term" value="F:intracellularly ATP-gated chloride channel activity"/>
    <property type="evidence" value="ECO:0000250"/>
    <property type="project" value="UniProtKB"/>
</dbReference>
<dbReference type="GO" id="GO:0030165">
    <property type="term" value="F:PDZ domain binding"/>
    <property type="evidence" value="ECO:0007669"/>
    <property type="project" value="Ensembl"/>
</dbReference>
<dbReference type="GO" id="GO:0051087">
    <property type="term" value="F:protein-folding chaperone binding"/>
    <property type="evidence" value="ECO:0007669"/>
    <property type="project" value="Ensembl"/>
</dbReference>
<dbReference type="GO" id="GO:0106138">
    <property type="term" value="F:Sec61 translocon complex binding"/>
    <property type="evidence" value="ECO:0007669"/>
    <property type="project" value="Ensembl"/>
</dbReference>
<dbReference type="GO" id="GO:0097186">
    <property type="term" value="P:amelogenesis"/>
    <property type="evidence" value="ECO:0007669"/>
    <property type="project" value="Ensembl"/>
</dbReference>
<dbReference type="GO" id="GO:0015701">
    <property type="term" value="P:bicarbonate transport"/>
    <property type="evidence" value="ECO:0000250"/>
    <property type="project" value="UniProtKB"/>
</dbReference>
<dbReference type="GO" id="GO:0071320">
    <property type="term" value="P:cellular response to cAMP"/>
    <property type="evidence" value="ECO:0000250"/>
    <property type="project" value="UniProtKB"/>
</dbReference>
<dbReference type="GO" id="GO:1904322">
    <property type="term" value="P:cellular response to forskolin"/>
    <property type="evidence" value="ECO:0000250"/>
    <property type="project" value="UniProtKB"/>
</dbReference>
<dbReference type="GO" id="GO:1902476">
    <property type="term" value="P:chloride transmembrane transport"/>
    <property type="evidence" value="ECO:0000250"/>
    <property type="project" value="UniProtKB"/>
</dbReference>
<dbReference type="GO" id="GO:0006695">
    <property type="term" value="P:cholesterol biosynthetic process"/>
    <property type="evidence" value="ECO:0007669"/>
    <property type="project" value="Ensembl"/>
</dbReference>
<dbReference type="GO" id="GO:0030301">
    <property type="term" value="P:cholesterol transport"/>
    <property type="evidence" value="ECO:0007669"/>
    <property type="project" value="Ensembl"/>
</dbReference>
<dbReference type="GO" id="GO:0051649">
    <property type="term" value="P:establishment of localization in cell"/>
    <property type="evidence" value="ECO:0007669"/>
    <property type="project" value="Ensembl"/>
</dbReference>
<dbReference type="GO" id="GO:0051454">
    <property type="term" value="P:intracellular pH elevation"/>
    <property type="evidence" value="ECO:0000250"/>
    <property type="project" value="UniProtKB"/>
</dbReference>
<dbReference type="GO" id="GO:0060081">
    <property type="term" value="P:membrane hyperpolarization"/>
    <property type="evidence" value="ECO:0000250"/>
    <property type="project" value="UniProtKB"/>
</dbReference>
<dbReference type="GO" id="GO:0050891">
    <property type="term" value="P:multicellular organismal-level water homeostasis"/>
    <property type="evidence" value="ECO:0000250"/>
    <property type="project" value="UniProtKB"/>
</dbReference>
<dbReference type="GO" id="GO:0070175">
    <property type="term" value="P:positive regulation of enamel mineralization"/>
    <property type="evidence" value="ECO:0007669"/>
    <property type="project" value="Ensembl"/>
</dbReference>
<dbReference type="GO" id="GO:0045921">
    <property type="term" value="P:positive regulation of exocytosis"/>
    <property type="evidence" value="ECO:0007669"/>
    <property type="project" value="Ensembl"/>
</dbReference>
<dbReference type="GO" id="GO:0035774">
    <property type="term" value="P:positive regulation of insulin secretion involved in cellular response to glucose stimulus"/>
    <property type="evidence" value="ECO:0007669"/>
    <property type="project" value="Ensembl"/>
</dbReference>
<dbReference type="GO" id="GO:0034976">
    <property type="term" value="P:response to endoplasmic reticulum stress"/>
    <property type="evidence" value="ECO:0000250"/>
    <property type="project" value="UniProtKB"/>
</dbReference>
<dbReference type="GO" id="GO:0048240">
    <property type="term" value="P:sperm capacitation"/>
    <property type="evidence" value="ECO:0000250"/>
    <property type="project" value="UniProtKB"/>
</dbReference>
<dbReference type="GO" id="GO:0035377">
    <property type="term" value="P:transepithelial water transport"/>
    <property type="evidence" value="ECO:0000250"/>
    <property type="project" value="UniProtKB"/>
</dbReference>
<dbReference type="GO" id="GO:0006904">
    <property type="term" value="P:vesicle docking involved in exocytosis"/>
    <property type="evidence" value="ECO:0007669"/>
    <property type="project" value="Ensembl"/>
</dbReference>
<dbReference type="CDD" id="cd18594">
    <property type="entry name" value="ABC_6TM_CFTR_D1"/>
    <property type="match status" value="1"/>
</dbReference>
<dbReference type="CDD" id="cd18600">
    <property type="entry name" value="ABC_6TM_CFTR_D2"/>
    <property type="match status" value="1"/>
</dbReference>
<dbReference type="CDD" id="cd03291">
    <property type="entry name" value="ABCC_CFTR1"/>
    <property type="match status" value="1"/>
</dbReference>
<dbReference type="CDD" id="cd03289">
    <property type="entry name" value="ABCC_CFTR2"/>
    <property type="match status" value="1"/>
</dbReference>
<dbReference type="FunFam" id="1.20.1560.10:FF:000017">
    <property type="entry name" value="Cystic fibrosis transmembrane conductance regulator"/>
    <property type="match status" value="1"/>
</dbReference>
<dbReference type="FunFam" id="1.20.1560.10:FF:000019">
    <property type="entry name" value="Cystic fibrosis transmembrane conductance regulator"/>
    <property type="match status" value="1"/>
</dbReference>
<dbReference type="FunFam" id="3.40.50.300:FF:000581">
    <property type="entry name" value="Cystic fibrosis transmembrane conductance regulator"/>
    <property type="match status" value="1"/>
</dbReference>
<dbReference type="FunFam" id="3.40.50.300:FF:000591">
    <property type="entry name" value="Cystic fibrosis transmembrane conductance regulator"/>
    <property type="match status" value="1"/>
</dbReference>
<dbReference type="Gene3D" id="1.20.1560.10">
    <property type="entry name" value="ABC transporter type 1, transmembrane domain"/>
    <property type="match status" value="2"/>
</dbReference>
<dbReference type="Gene3D" id="3.40.50.300">
    <property type="entry name" value="P-loop containing nucleotide triphosphate hydrolases"/>
    <property type="match status" value="2"/>
</dbReference>
<dbReference type="InterPro" id="IPR003593">
    <property type="entry name" value="AAA+_ATPase"/>
</dbReference>
<dbReference type="InterPro" id="IPR011527">
    <property type="entry name" value="ABC1_TM_dom"/>
</dbReference>
<dbReference type="InterPro" id="IPR036640">
    <property type="entry name" value="ABC1_TM_sf"/>
</dbReference>
<dbReference type="InterPro" id="IPR003439">
    <property type="entry name" value="ABC_transporter-like_ATP-bd"/>
</dbReference>
<dbReference type="InterPro" id="IPR017871">
    <property type="entry name" value="ABC_transporter-like_CS"/>
</dbReference>
<dbReference type="InterPro" id="IPR050173">
    <property type="entry name" value="ABC_transporter_C-like"/>
</dbReference>
<dbReference type="InterPro" id="IPR009147">
    <property type="entry name" value="CFTR/ABCC7"/>
</dbReference>
<dbReference type="InterPro" id="IPR047082">
    <property type="entry name" value="CFTR1_ATP-bd_dom1"/>
</dbReference>
<dbReference type="InterPro" id="IPR025837">
    <property type="entry name" value="CFTR_reg_dom"/>
</dbReference>
<dbReference type="InterPro" id="IPR027417">
    <property type="entry name" value="P-loop_NTPase"/>
</dbReference>
<dbReference type="NCBIfam" id="TIGR01271">
    <property type="entry name" value="CFTR_protein"/>
    <property type="match status" value="1"/>
</dbReference>
<dbReference type="PANTHER" id="PTHR24223">
    <property type="entry name" value="ATP-BINDING CASSETTE SUB-FAMILY C"/>
    <property type="match status" value="1"/>
</dbReference>
<dbReference type="PANTHER" id="PTHR24223:SF19">
    <property type="entry name" value="CYSTIC FIBROSIS TRANSMEMBRANE CONDUCTANCE REGULATOR"/>
    <property type="match status" value="1"/>
</dbReference>
<dbReference type="Pfam" id="PF00664">
    <property type="entry name" value="ABC_membrane"/>
    <property type="match status" value="2"/>
</dbReference>
<dbReference type="Pfam" id="PF00005">
    <property type="entry name" value="ABC_tran"/>
    <property type="match status" value="2"/>
</dbReference>
<dbReference type="Pfam" id="PF14396">
    <property type="entry name" value="CFTR_R"/>
    <property type="match status" value="1"/>
</dbReference>
<dbReference type="PRINTS" id="PR01851">
    <property type="entry name" value="CYSFIBREGLTR"/>
</dbReference>
<dbReference type="SMART" id="SM00382">
    <property type="entry name" value="AAA"/>
    <property type="match status" value="2"/>
</dbReference>
<dbReference type="SUPFAM" id="SSF90123">
    <property type="entry name" value="ABC transporter transmembrane region"/>
    <property type="match status" value="2"/>
</dbReference>
<dbReference type="SUPFAM" id="SSF52540">
    <property type="entry name" value="P-loop containing nucleoside triphosphate hydrolases"/>
    <property type="match status" value="2"/>
</dbReference>
<dbReference type="PROSITE" id="PS50929">
    <property type="entry name" value="ABC_TM1F"/>
    <property type="match status" value="2"/>
</dbReference>
<dbReference type="PROSITE" id="PS00211">
    <property type="entry name" value="ABC_TRANSPORTER_1"/>
    <property type="match status" value="1"/>
</dbReference>
<dbReference type="PROSITE" id="PS50893">
    <property type="entry name" value="ABC_TRANSPORTER_2"/>
    <property type="match status" value="2"/>
</dbReference>
<keyword id="KW-0067">ATP-binding</keyword>
<keyword id="KW-1003">Cell membrane</keyword>
<keyword id="KW-0868">Chloride</keyword>
<keyword id="KW-0869">Chloride channel</keyword>
<keyword id="KW-0256">Endoplasmic reticulum</keyword>
<keyword id="KW-0967">Endosome</keyword>
<keyword id="KW-0325">Glycoprotein</keyword>
<keyword id="KW-0407">Ion channel</keyword>
<keyword id="KW-0406">Ion transport</keyword>
<keyword id="KW-0413">Isomerase</keyword>
<keyword id="KW-1017">Isopeptide bond</keyword>
<keyword id="KW-0449">Lipoprotein</keyword>
<keyword id="KW-0472">Membrane</keyword>
<keyword id="KW-0547">Nucleotide-binding</keyword>
<keyword id="KW-0539">Nucleus</keyword>
<keyword id="KW-0564">Palmitate</keyword>
<keyword id="KW-0597">Phosphoprotein</keyword>
<keyword id="KW-1185">Reference proteome</keyword>
<keyword id="KW-0677">Repeat</keyword>
<keyword id="KW-0812">Transmembrane</keyword>
<keyword id="KW-1133">Transmembrane helix</keyword>
<keyword id="KW-0813">Transport</keyword>
<keyword id="KW-0832">Ubl conjugation</keyword>
<evidence type="ECO:0000250" key="1">
    <source>
        <dbReference type="UniProtKB" id="P13569"/>
    </source>
</evidence>
<evidence type="ECO:0000250" key="2">
    <source>
        <dbReference type="UniProtKB" id="P26361"/>
    </source>
</evidence>
<evidence type="ECO:0000250" key="3">
    <source>
        <dbReference type="UniProtKB" id="P34158"/>
    </source>
</evidence>
<evidence type="ECO:0000255" key="4"/>
<evidence type="ECO:0000255" key="5">
    <source>
        <dbReference type="PROSITE-ProRule" id="PRU00434"/>
    </source>
</evidence>
<evidence type="ECO:0000255" key="6">
    <source>
        <dbReference type="PROSITE-ProRule" id="PRU00441"/>
    </source>
</evidence>
<evidence type="ECO:0000256" key="7">
    <source>
        <dbReference type="SAM" id="MobiDB-lite"/>
    </source>
</evidence>
<evidence type="ECO:0000305" key="8"/>
<organism>
    <name type="scientific">Saimiri boliviensis boliviensis</name>
    <name type="common">Bolivian squirrel monkey</name>
    <dbReference type="NCBI Taxonomy" id="39432"/>
    <lineage>
        <taxon>Eukaryota</taxon>
        <taxon>Metazoa</taxon>
        <taxon>Chordata</taxon>
        <taxon>Craniata</taxon>
        <taxon>Vertebrata</taxon>
        <taxon>Euteleostomi</taxon>
        <taxon>Mammalia</taxon>
        <taxon>Eutheria</taxon>
        <taxon>Euarchontoglires</taxon>
        <taxon>Primates</taxon>
        <taxon>Haplorrhini</taxon>
        <taxon>Platyrrhini</taxon>
        <taxon>Cebidae</taxon>
        <taxon>Saimiriinae</taxon>
        <taxon>Saimiri</taxon>
    </lineage>
</organism>
<reference key="1">
    <citation type="submission" date="2006-09" db="EMBL/GenBank/DDBJ databases">
        <title>NISC comparative sequencing initiative.</title>
        <authorList>
            <person name="Antonellis A."/>
            <person name="Ayele K."/>
            <person name="Benjamin B."/>
            <person name="Blakesley R.W."/>
            <person name="Boakye A."/>
            <person name="Bouffard G.G."/>
            <person name="Brinkley C."/>
            <person name="Brooks S."/>
            <person name="Chu G."/>
            <person name="Coleman H."/>
            <person name="Engle J."/>
            <person name="Gestole M."/>
            <person name="Greene A."/>
            <person name="Guan X."/>
            <person name="Gupta J."/>
            <person name="Haghighi P."/>
            <person name="Han J."/>
            <person name="Hansen N."/>
            <person name="Ho S.-L."/>
            <person name="Hu P."/>
            <person name="Hunter G."/>
            <person name="Hurle B."/>
            <person name="Idol J.R."/>
            <person name="Kwong P."/>
            <person name="Laric P."/>
            <person name="Larson S."/>
            <person name="Lee-Lin S.-Q."/>
            <person name="Legaspi R."/>
            <person name="Madden M."/>
            <person name="Maduro Q.L."/>
            <person name="Maduro V.B."/>
            <person name="Margulies E.H."/>
            <person name="Masiello C."/>
            <person name="Maskeri B."/>
            <person name="McDowell J."/>
            <person name="Mojidi H.A."/>
            <person name="Mullikin J.C."/>
            <person name="Oestreicher J.S."/>
            <person name="Park M."/>
            <person name="Portnoy M.E."/>
            <person name="Prasad A."/>
            <person name="Puri O."/>
            <person name="Reddix-Dugue N."/>
            <person name="Schandler K."/>
            <person name="Schueler M.G."/>
            <person name="Sison C."/>
            <person name="Stantripop S."/>
            <person name="Stephen E."/>
            <person name="Taye A."/>
            <person name="Thomas J.W."/>
            <person name="Thomas P.J."/>
            <person name="Tsipouri V."/>
            <person name="Ung L."/>
            <person name="Vogt J.L."/>
            <person name="Wetherby K.D."/>
            <person name="Young A."/>
            <person name="Green E.D."/>
        </authorList>
    </citation>
    <scope>NUCLEOTIDE SEQUENCE [LARGE SCALE GENOMIC DNA]</scope>
</reference>
<protein>
    <recommendedName>
        <fullName evidence="1">Cystic fibrosis transmembrane conductance regulator</fullName>
        <shortName>CFTR</shortName>
    </recommendedName>
    <alternativeName>
        <fullName>ATP-binding cassette sub-family C member 7</fullName>
    </alternativeName>
    <alternativeName>
        <fullName>Channel conductance-controlling ATPase</fullName>
        <ecNumber evidence="1">5.6.1.6</ecNumber>
    </alternativeName>
    <alternativeName>
        <fullName>cAMP-dependent chloride channel</fullName>
    </alternativeName>
</protein>
<accession>Q09YH0</accession>
<feature type="chain" id="PRO_0000260782" description="Cystic fibrosis transmembrane conductance regulator">
    <location>
        <begin position="1"/>
        <end position="1481"/>
    </location>
</feature>
<feature type="topological domain" description="Cytoplasmic" evidence="1">
    <location>
        <begin position="1"/>
        <end position="77"/>
    </location>
</feature>
<feature type="transmembrane region" description="Helical; Name=1" evidence="1">
    <location>
        <begin position="78"/>
        <end position="98"/>
    </location>
</feature>
<feature type="topological domain" description="Extracellular" evidence="1">
    <location>
        <begin position="99"/>
        <end position="122"/>
    </location>
</feature>
<feature type="transmembrane region" description="Helical; Name=2" evidence="1">
    <location>
        <begin position="123"/>
        <end position="146"/>
    </location>
</feature>
<feature type="topological domain" description="Cytoplasmic" evidence="1">
    <location>
        <begin position="147"/>
        <end position="195"/>
    </location>
</feature>
<feature type="transmembrane region" description="Helical; Name=3" evidence="1">
    <location>
        <begin position="196"/>
        <end position="216"/>
    </location>
</feature>
<feature type="topological domain" description="Extracellular" evidence="1">
    <location>
        <begin position="217"/>
        <end position="222"/>
    </location>
</feature>
<feature type="transmembrane region" description="Helical; Name=4" evidence="1">
    <location>
        <begin position="223"/>
        <end position="243"/>
    </location>
</feature>
<feature type="topological domain" description="Cytoplasmic" evidence="1">
    <location>
        <begin position="244"/>
        <end position="298"/>
    </location>
</feature>
<feature type="transmembrane region" description="Helical; Name=5" evidence="1">
    <location>
        <begin position="299"/>
        <end position="319"/>
    </location>
</feature>
<feature type="topological domain" description="Extracellular" evidence="1">
    <location>
        <begin position="320"/>
        <end position="339"/>
    </location>
</feature>
<feature type="transmembrane region" description="Helical; Name=6" evidence="1">
    <location>
        <begin position="340"/>
        <end position="358"/>
    </location>
</feature>
<feature type="topological domain" description="Cytoplasmic" evidence="1">
    <location>
        <begin position="359"/>
        <end position="858"/>
    </location>
</feature>
<feature type="transmembrane region" description="Helical; Name=7" evidence="1">
    <location>
        <begin position="859"/>
        <end position="879"/>
    </location>
</feature>
<feature type="topological domain" description="Extracellular" evidence="1">
    <location>
        <begin position="880"/>
        <end position="918"/>
    </location>
</feature>
<feature type="transmembrane region" description="Discontinuously helical; Name=8" evidence="1">
    <location>
        <begin position="919"/>
        <end position="939"/>
    </location>
</feature>
<feature type="topological domain" description="Cytoplasmic" evidence="1">
    <location>
        <begin position="940"/>
        <end position="990"/>
    </location>
</feature>
<feature type="transmembrane region" description="Helical; Name=9" evidence="1">
    <location>
        <begin position="991"/>
        <end position="1011"/>
    </location>
</feature>
<feature type="topological domain" description="Extracellular" evidence="1">
    <location>
        <begin position="1012"/>
        <end position="1013"/>
    </location>
</feature>
<feature type="transmembrane region" description="Helical; Name=10" evidence="1">
    <location>
        <begin position="1014"/>
        <end position="1034"/>
    </location>
</feature>
<feature type="topological domain" description="Cytoplasmic" evidence="1">
    <location>
        <begin position="1035"/>
        <end position="1095"/>
    </location>
</feature>
<feature type="transmembrane region" description="Helical; Name=11" evidence="1">
    <location>
        <begin position="1096"/>
        <end position="1116"/>
    </location>
</feature>
<feature type="topological domain" description="Extracellular" evidence="1">
    <location>
        <begin position="1117"/>
        <end position="1130"/>
    </location>
</feature>
<feature type="transmembrane region" description="Helical; Name=12" evidence="1">
    <location>
        <begin position="1131"/>
        <end position="1151"/>
    </location>
</feature>
<feature type="topological domain" description="Cytoplasmic" evidence="1">
    <location>
        <begin position="1152"/>
        <end position="1481"/>
    </location>
</feature>
<feature type="domain" description="ABC transmembrane type-1 1" evidence="6">
    <location>
        <begin position="81"/>
        <end position="365"/>
    </location>
</feature>
<feature type="domain" description="ABC transporter 1" evidence="5">
    <location>
        <begin position="423"/>
        <end position="646"/>
    </location>
</feature>
<feature type="domain" description="ABC transmembrane type-1 2" evidence="6">
    <location>
        <begin position="859"/>
        <end position="1155"/>
    </location>
</feature>
<feature type="domain" description="ABC transporter 2" evidence="5">
    <location>
        <begin position="1211"/>
        <end position="1444"/>
    </location>
</feature>
<feature type="region of interest" description="Disordered R region" evidence="1">
    <location>
        <begin position="654"/>
        <end position="831"/>
    </location>
</feature>
<feature type="region of interest" description="Interaction with GORASP2" evidence="1">
    <location>
        <begin position="1387"/>
        <end position="1481"/>
    </location>
</feature>
<feature type="region of interest" description="Disordered" evidence="7">
    <location>
        <begin position="1453"/>
        <end position="1481"/>
    </location>
</feature>
<feature type="short sequence motif" description="PDZ-binding" evidence="1">
    <location>
        <begin position="1479"/>
        <end position="1481"/>
    </location>
</feature>
<feature type="compositionally biased region" description="Acidic residues" evidence="7">
    <location>
        <begin position="1471"/>
        <end position="1481"/>
    </location>
</feature>
<feature type="binding site" evidence="1">
    <location>
        <position position="401"/>
    </location>
    <ligand>
        <name>ATP</name>
        <dbReference type="ChEBI" id="CHEBI:30616"/>
        <label>1</label>
    </ligand>
</feature>
<feature type="binding site" evidence="1">
    <location>
        <position position="434"/>
    </location>
    <ligand>
        <name>ATP</name>
        <dbReference type="ChEBI" id="CHEBI:30616"/>
        <label>1</label>
    </ligand>
</feature>
<feature type="binding site" evidence="5">
    <location>
        <begin position="458"/>
        <end position="465"/>
    </location>
    <ligand>
        <name>ATP</name>
        <dbReference type="ChEBI" id="CHEBI:30616"/>
        <label>1</label>
    </ligand>
</feature>
<feature type="binding site" evidence="2">
    <location>
        <position position="493"/>
    </location>
    <ligand>
        <name>ATP</name>
        <dbReference type="ChEBI" id="CHEBI:30616"/>
        <label>1</label>
    </ligand>
</feature>
<feature type="binding site" evidence="1">
    <location>
        <position position="1220"/>
    </location>
    <ligand>
        <name>ATP</name>
        <dbReference type="ChEBI" id="CHEBI:30616"/>
        <label>2</label>
    </ligand>
</feature>
<feature type="binding site" evidence="5">
    <location>
        <begin position="1245"/>
        <end position="1252"/>
    </location>
    <ligand>
        <name>ATP</name>
        <dbReference type="ChEBI" id="CHEBI:30616"/>
        <label>2</label>
    </ligand>
</feature>
<feature type="modified residue" description="Phosphoserine" evidence="1">
    <location>
        <position position="549"/>
    </location>
</feature>
<feature type="modified residue" description="Phosphoserine" evidence="1">
    <location>
        <position position="660"/>
    </location>
</feature>
<feature type="modified residue" description="Phosphoserine; by PKA" evidence="1">
    <location>
        <position position="670"/>
    </location>
</feature>
<feature type="modified residue" description="Phosphoserine" evidence="1">
    <location>
        <position position="686"/>
    </location>
</feature>
<feature type="modified residue" description="Phosphoserine" evidence="1">
    <location>
        <position position="700"/>
    </location>
</feature>
<feature type="modified residue" description="Phosphoserine" evidence="1">
    <location>
        <position position="712"/>
    </location>
</feature>
<feature type="modified residue" description="Phosphothreonine" evidence="1">
    <location>
        <position position="717"/>
    </location>
</feature>
<feature type="modified residue" description="Phosphoserine" evidence="1">
    <location>
        <position position="737"/>
    </location>
</feature>
<feature type="modified residue" description="Phosphoserine" evidence="1">
    <location>
        <position position="753"/>
    </location>
</feature>
<feature type="modified residue" description="Phosphoserine" evidence="1">
    <location>
        <position position="768"/>
    </location>
</feature>
<feature type="modified residue" description="Phosphoserine" evidence="1">
    <location>
        <position position="790"/>
    </location>
</feature>
<feature type="modified residue" description="Phosphoserine" evidence="1">
    <location>
        <position position="795"/>
    </location>
</feature>
<feature type="modified residue" description="Phosphoserine" evidence="1">
    <location>
        <position position="813"/>
    </location>
</feature>
<feature type="modified residue" description="Phosphoserine" evidence="1">
    <location>
        <position position="1445"/>
    </location>
</feature>
<feature type="modified residue" description="Phosphoserine" evidence="1">
    <location>
        <position position="1457"/>
    </location>
</feature>
<feature type="lipid moiety-binding region" description="S-palmitoyl cysteine" evidence="1">
    <location>
        <position position="524"/>
    </location>
</feature>
<feature type="lipid moiety-binding region" description="S-palmitoyl cysteine" evidence="1">
    <location>
        <position position="1396"/>
    </location>
</feature>
<feature type="glycosylation site" description="N-linked (GlcNAc...) asparagine" evidence="4">
    <location>
        <position position="894"/>
    </location>
</feature>
<feature type="glycosylation site" description="N-linked (GlcNAc...) asparagine" evidence="4">
    <location>
        <position position="900"/>
    </location>
</feature>
<feature type="glycosylation site" description="N-linked (GlcNAc...) asparagine" evidence="4">
    <location>
        <position position="909"/>
    </location>
</feature>
<feature type="cross-link" description="Glycyl lysine isopeptide (Lys-Gly) (interchain with G-Cter in ubiquitin)" evidence="1">
    <location>
        <position position="688"/>
    </location>
</feature>
<sequence length="1481" mass="168432">MQRSPLEKASVVSKLFFSWTRPVLKKGYRQRLELSDIYQIPSADSADNLSEKLEREWDRELASKKNPKLINALRRCFFWRFTFYGILLYLGEVTKAVQPLLLGRIIASYDPDNKTERSIAIYLGIGLCLLFIVRTLLLHPAIFGLHHIGMQMRIAMFSLIYKKTLKLSSRVLDKISIGQLVSLLSNNLNKFDEGLALAHFVWIAPLQVALLMGLIWELLQASAFCGLGFLIVLALFQAGLGRMMMKYRDQRAGKINERLVITSEMIENIQSVKAYCWEEAMEKMIENLRQTELKLTRKAAYVRYFNSSAFFFSGFFVVFLSVLPYALIKGIALRKIFTTISFCIVLRMAVTRQFPWAVQTWYDSLGAINKIQDFLQKQEYKTLEYNLTTTEVVMENVTAFWEEGFGELFEKVKQNNNNRKTSNGDDNLFFSNFSLLGTPVLKDINFKIERGQLLAVAGSTGAGKTSLLMMIMGELEPSEGKIKHSGRISFCSQFSWIMPGTIKENIIFGVSYDEYRYRSVIKACQLEEDISKFAEKDNIVLGEGGITLSGGQRARISLARAVYKDADLYLLDSPFGYLDVLTEKEIFESCVCKLMANKTRILVTSKMEHLKKADKILILHEGSSYFYGTFSELQNLRPDFSSKLMGYDSFDQFSSERRNSILTETLRRFSLEGDAPVSWTETKKQSFKQTGEFGEKRKNSILNSINSIRKFSIVQKTPLQMNGIEEDSDEPLERRLSLIPDSEQGEAILPRISVINTGPALQVRRRQSVLNMMTHSVNQGQSGHRKTTASTRKMSLAPQANLTELDIYSRRLSQETGLEISEEINEEDLKECFFDDMESIPAVTTWNTYLRYITLHKSLIFVLIWCLVIFLAEVAASLVLLWLLGNTRFQDKGNSTYSRNNSYAVIITNTSSYYVFYIYVGVADTLLALGFFRGLPLVHTLITVSKILHHKMLHSVLQAPMSTLNTLKAGGILNRFSKDIAILDDLLPLTIFDFIQLLLIVIGAIAVVSVLQPYIFLATVPVIAAFILLRAYFLQTSQQLKQLESAGRSPIFTHLVTSLKGLWTLRAFGRQPYFETLFHKALNLHTASWFLYLSTLRWFQMRIEMIFVIFFIAVTFISILTTGEGEGTVGIILTLAMNIMSTLQWAVNSSIDVDSLMRSVSRVFKFIDMPTEEGKPTKSTKAYKNGQLSKVMIIENSHVKKDDIWPSGGQMTIKDLTAKYVEGGNAILENISFSISPGQRVGLLGRTGSGKSTLLSAFLRLLNTEGEIQIDGVSWDSITLQQWRKAFGVIPQKVFIFTGTFRKNLDPYEQWSDQEIWKVADEVGLRSVIEQFPGKLDFVLVDGGCVLSHGHKQLMCLARSVLSKAKILLLDEPSAHLDPVTYQIIRRALKQAFADCTVILCEHRIEAMLECQQFLVIEENKVRQYDSIQKLLNEKSLFRQAISHSDRMKLFPHRNSSKYKSRPQIASLKEETEEEVQETRL</sequence>
<gene>
    <name evidence="1" type="primary">CFTR</name>
    <name type="synonym">ABCC7</name>
</gene>
<proteinExistence type="inferred from homology"/>
<comment type="function">
    <text evidence="1 2">Epithelial ion channel that plays an important role in the regulation of epithelial ion and water transport and fluid homeostasis. Mediates the transport of chloride ions across the cell membrane (By similarity). Possesses an intrinsic ATPase activity and utilizes ATP to gate its channel; the passive flow of anions through the channel is gated by cycles of ATP binding and hydrolysis by the ATP-binding domains (By similarity). The ion channel is also permeable to HCO(3)(-); selectivity depends on the extracellular chloride concentration. Exerts its function also by modulating the activity of other ion channels and transporters. Contributes to the regulation of the pH and the ion content of the epithelial fluid layer. Modulates the activity of the epithelial sodium channel (ENaC) complex, in part by regulating the cell surface expression of the ENaC complex. May regulate bicarbonate secretion and salvage in epithelial cells by regulating the transporter SLC4A7. Can inhibit the chloride channel activity of ANO1 (By similarity). Plays a role in the chloride and bicarbonate homeostasis during sperm epididymal maturation and capacitation (By similarity).</text>
</comment>
<comment type="catalytic activity">
    <reaction evidence="1">
        <text>ATP + H2O + closed Cl(-) channel = ADP + phosphate + open Cl(-) channel.</text>
        <dbReference type="EC" id="5.6.1.6"/>
    </reaction>
</comment>
<comment type="catalytic activity">
    <reaction evidence="1">
        <text>chloride(in) = chloride(out)</text>
        <dbReference type="Rhea" id="RHEA:29823"/>
        <dbReference type="ChEBI" id="CHEBI:17996"/>
    </reaction>
</comment>
<comment type="catalytic activity">
    <reaction evidence="1">
        <text>hydrogencarbonate(in) = hydrogencarbonate(out)</text>
        <dbReference type="Rhea" id="RHEA:28695"/>
        <dbReference type="ChEBI" id="CHEBI:17544"/>
    </reaction>
</comment>
<comment type="catalytic activity">
    <reaction evidence="1">
        <text>ATP + H2O = ADP + phosphate + H(+)</text>
        <dbReference type="Rhea" id="RHEA:13065"/>
        <dbReference type="ChEBI" id="CHEBI:15377"/>
        <dbReference type="ChEBI" id="CHEBI:15378"/>
        <dbReference type="ChEBI" id="CHEBI:30616"/>
        <dbReference type="ChEBI" id="CHEBI:43474"/>
        <dbReference type="ChEBI" id="CHEBI:456216"/>
    </reaction>
    <physiologicalReaction direction="left-to-right" evidence="1">
        <dbReference type="Rhea" id="RHEA:13066"/>
    </physiologicalReaction>
</comment>
<comment type="subunit">
    <text evidence="1 2 3">Monomer; does not require oligomerization for channel activity. May form oligomers in the membrane (By similarity). Interacts with SLC26A3, SLC26A6 and NHERF1 (By similarity). Interacts with SHANK2 (By similarity). Interacts with MYO6 (By similarity). Interacts (via C-terminus) with GOPC (via PDZ domain); this promotes CFTR internalization and thereby decreases channel activity. Interacts with SLC4A7 through NHERF1. Found in a complex with MYO5B and RAB11A. Interacts with ANO1. Interacts with SLC26A8 (By similarity). Interacts with AHCYL1; the interaction increases CFTR activity (By similarity). Interacts with CSE1L (By similarity). The core-glycosylated form interacts with GORASP2 (via PDZ GRASP-type 1 domain) in respone to ER stress (By similarity). Interacts with MARCHF2; the interaction leads to CFTR ubiqtuitination and degradation (By similarity). Interacts with ADGRG2 (By similarity).</text>
</comment>
<comment type="subcellular location">
    <subcellularLocation>
        <location evidence="2">Apical cell membrane</location>
        <topology evidence="1">Multi-pass membrane protein</topology>
    </subcellularLocation>
    <subcellularLocation>
        <location evidence="1">Early endosome membrane</location>
        <topology evidence="1">Multi-pass membrane protein</topology>
    </subcellularLocation>
    <subcellularLocation>
        <location evidence="2">Cell membrane</location>
        <topology evidence="1">Multi-pass membrane protein</topology>
    </subcellularLocation>
    <subcellularLocation>
        <location evidence="1">Recycling endosome membrane</location>
        <topology evidence="1">Multi-pass membrane protein</topology>
    </subcellularLocation>
    <subcellularLocation>
        <location evidence="1">Endoplasmic reticulum membrane</location>
        <topology evidence="1">Multi-pass membrane protein</topology>
    </subcellularLocation>
    <subcellularLocation>
        <location evidence="3">Nucleus</location>
    </subcellularLocation>
    <text evidence="1 3">The channel is internalized from the cell surface into an endosomal recycling compartment, from where it is recycled to the cell membrane. In the oviduct and bronchus, detected on the apical side of epithelial cells, but not associated with cilia. In Sertoli cells, a processed product is detected in the nucleus. ER stress induces GORASP2-mediated unconventional (ER/Golgi-independent) trafficking of core-glycosylated CFTR to cell membrane.</text>
</comment>
<comment type="domain">
    <text evidence="1 2">Binds and hydrolyzes ATP via the two cytoplasmic ABC transporter nucleotide-binding domains. The two ATP-binding domains interact with each other, forming a head-to-tail dimer. Normal ATPase activity requires interaction between the two domains. The first ABC transporter nucleotide-binding domain has no ATPase activity by itself.</text>
</comment>
<comment type="domain">
    <text evidence="1">The PDZ-binding motif mediates interactions with GOPC and with the SLC4A7, NHERF1/EBP50 complex.</text>
</comment>
<comment type="domain">
    <text evidence="1">The disordered R region mediates channel activation when it is phosphorylated, but not in the absence of phosphorylation.</text>
</comment>
<comment type="PTM">
    <text evidence="1">N-glycosylated.</text>
</comment>
<comment type="PTM">
    <text evidence="1">Phosphorylated; cAMP treatment promotes phosphorylation and activates the channel. Dephosphorylation decreases the ATPase activity (in vitro). Phosphorylation at PKA sites activates the channel. Phosphorylation at PKC sites enhances the response to phosphorylation by PKA. Phosphorylated by AMPK; this inhibits channel activity.</text>
</comment>
<comment type="PTM">
    <text evidence="1">Ubiquitinated, leading to its degradation in the lysosome. Deubiquitination by USP10 in early endosomes enhances its endocytic recycling to the cell membrane. Ubiquitinated by RNF185 during ER stress. Ubiquitinated by MARCHF2 (By similarity).</text>
</comment>
<comment type="similarity">
    <text evidence="8">Belongs to the ABC transporter superfamily. ABCC family. CFTR transporter (TC 3.A.1.202) subfamily.</text>
</comment>
<name>CFTR_SAIBB</name>